<protein>
    <recommendedName>
        <fullName>Seripauperin-23</fullName>
    </recommendedName>
    <alternativeName>
        <fullName>Cell wall protein DAN2</fullName>
    </alternativeName>
    <alternativeName>
        <fullName>Delayed anaerobic protein 2</fullName>
    </alternativeName>
</protein>
<gene>
    <name type="primary">PAU23</name>
    <name type="synonym">DAN2</name>
    <name type="ordered locus">YLR037C</name>
    <name type="ORF">L1909</name>
</gene>
<name>PAU23_YEAST</name>
<evidence type="ECO:0000250" key="1"/>
<evidence type="ECO:0000255" key="2"/>
<evidence type="ECO:0000269" key="3">
    <source>
    </source>
</evidence>
<evidence type="ECO:0000269" key="4">
    <source>
    </source>
</evidence>
<evidence type="ECO:0000269" key="5">
    <source>
    </source>
</evidence>
<evidence type="ECO:0000305" key="6"/>
<proteinExistence type="evidence at transcript level"/>
<dbReference type="EMBL" id="Z73209">
    <property type="protein sequence ID" value="CAA97565.1"/>
    <property type="molecule type" value="Genomic_DNA"/>
</dbReference>
<dbReference type="EMBL" id="BK006945">
    <property type="protein sequence ID" value="DAA09356.1"/>
    <property type="molecule type" value="Genomic_DNA"/>
</dbReference>
<dbReference type="PIR" id="S64864">
    <property type="entry name" value="S64864"/>
</dbReference>
<dbReference type="RefSeq" id="NP_013138.1">
    <property type="nucleotide sequence ID" value="NM_001181924.1"/>
</dbReference>
<dbReference type="BioGRID" id="31313">
    <property type="interactions" value="47"/>
</dbReference>
<dbReference type="DIP" id="DIP-4801N"/>
<dbReference type="FunCoup" id="Q07987">
    <property type="interactions" value="49"/>
</dbReference>
<dbReference type="IntAct" id="Q07987">
    <property type="interactions" value="1"/>
</dbReference>
<dbReference type="STRING" id="4932.YLR037C"/>
<dbReference type="PaxDb" id="4932-YLR037C"/>
<dbReference type="EnsemblFungi" id="YLR037C_mRNA">
    <property type="protein sequence ID" value="YLR037C"/>
    <property type="gene ID" value="YLR037C"/>
</dbReference>
<dbReference type="GeneID" id="850726"/>
<dbReference type="KEGG" id="sce:YLR037C"/>
<dbReference type="AGR" id="SGD:S000004027"/>
<dbReference type="SGD" id="S000004027">
    <property type="gene designation" value="PAU23"/>
</dbReference>
<dbReference type="VEuPathDB" id="FungiDB:YLR037C"/>
<dbReference type="eggNOG" id="ENOG502SR1B">
    <property type="taxonomic scope" value="Eukaryota"/>
</dbReference>
<dbReference type="GeneTree" id="ENSGT00940000176276"/>
<dbReference type="HOGENOM" id="CLU_136376_0_0_1"/>
<dbReference type="InParanoid" id="Q07987"/>
<dbReference type="OrthoDB" id="4060994at2759"/>
<dbReference type="BioCyc" id="YEAST:G3O-32196-MONOMER"/>
<dbReference type="BioGRID-ORCS" id="850726">
    <property type="hits" value="3 hits in 10 CRISPR screens"/>
</dbReference>
<dbReference type="PRO" id="PR:Q07987"/>
<dbReference type="Proteomes" id="UP000002311">
    <property type="component" value="Chromosome XII"/>
</dbReference>
<dbReference type="RNAct" id="Q07987">
    <property type="molecule type" value="protein"/>
</dbReference>
<dbReference type="GO" id="GO:0005576">
    <property type="term" value="C:extracellular region"/>
    <property type="evidence" value="ECO:0007669"/>
    <property type="project" value="UniProtKB-KW"/>
</dbReference>
<dbReference type="GO" id="GO:0009277">
    <property type="term" value="C:fungal-type cell wall"/>
    <property type="evidence" value="ECO:0000318"/>
    <property type="project" value="GO_Central"/>
</dbReference>
<dbReference type="GO" id="GO:0000324">
    <property type="term" value="C:fungal-type vacuole"/>
    <property type="evidence" value="ECO:0007005"/>
    <property type="project" value="SGD"/>
</dbReference>
<dbReference type="GO" id="GO:0005199">
    <property type="term" value="F:structural constituent of cell wall"/>
    <property type="evidence" value="ECO:0000318"/>
    <property type="project" value="GO_Central"/>
</dbReference>
<dbReference type="GO" id="GO:0031505">
    <property type="term" value="P:fungal-type cell wall organization"/>
    <property type="evidence" value="ECO:0000318"/>
    <property type="project" value="GO_Central"/>
</dbReference>
<dbReference type="InterPro" id="IPR000992">
    <property type="entry name" value="SRP1_TIP1"/>
</dbReference>
<dbReference type="InterPro" id="IPR050788">
    <property type="entry name" value="Yeast_SRP1/TIP1_CWP"/>
</dbReference>
<dbReference type="PANTHER" id="PTHR31002:SF34">
    <property type="entry name" value="CELL WALL PROTEIN CWP1-RELATED"/>
    <property type="match status" value="1"/>
</dbReference>
<dbReference type="PANTHER" id="PTHR31002">
    <property type="entry name" value="SERIPAUPERIN"/>
    <property type="match status" value="1"/>
</dbReference>
<dbReference type="Pfam" id="PF00660">
    <property type="entry name" value="SRP1_TIP1"/>
    <property type="match status" value="1"/>
</dbReference>
<dbReference type="PROSITE" id="PS00724">
    <property type="entry name" value="SRP1_TIP1"/>
    <property type="match status" value="1"/>
</dbReference>
<feature type="signal peptide" evidence="2">
    <location>
        <begin position="1"/>
        <end position="20"/>
    </location>
</feature>
<feature type="chain" id="PRO_0000033241" description="Seripauperin-23">
    <location>
        <begin position="21"/>
        <end position="124"/>
    </location>
</feature>
<sequence length="124" mass="13178">MVKLTSIVAGVAAIAAGVAAAPATTTLSPSDERVNLVELGVYVSDIRAHLAEYYMFQAAHPTETYPVEIAEAVFNYGDFTTMLTGIPADQVTRVITGVPWYSTRLRPAISSALSKDGIYTAVPN</sequence>
<accession>Q07987</accession>
<accession>D6VY40</accession>
<reference key="1">
    <citation type="journal article" date="1997" name="Nature">
        <title>The nucleotide sequence of Saccharomyces cerevisiae chromosome XII.</title>
        <authorList>
            <person name="Johnston M."/>
            <person name="Hillier L.W."/>
            <person name="Riles L."/>
            <person name="Albermann K."/>
            <person name="Andre B."/>
            <person name="Ansorge W."/>
            <person name="Benes V."/>
            <person name="Brueckner M."/>
            <person name="Delius H."/>
            <person name="Dubois E."/>
            <person name="Duesterhoeft A."/>
            <person name="Entian K.-D."/>
            <person name="Floeth M."/>
            <person name="Goffeau A."/>
            <person name="Hebling U."/>
            <person name="Heumann K."/>
            <person name="Heuss-Neitzel D."/>
            <person name="Hilbert H."/>
            <person name="Hilger F."/>
            <person name="Kleine K."/>
            <person name="Koetter P."/>
            <person name="Louis E.J."/>
            <person name="Messenguy F."/>
            <person name="Mewes H.-W."/>
            <person name="Miosga T."/>
            <person name="Moestl D."/>
            <person name="Mueller-Auer S."/>
            <person name="Nentwich U."/>
            <person name="Obermaier B."/>
            <person name="Piravandi E."/>
            <person name="Pohl T.M."/>
            <person name="Portetelle D."/>
            <person name="Purnelle B."/>
            <person name="Rechmann S."/>
            <person name="Rieger M."/>
            <person name="Rinke M."/>
            <person name="Rose M."/>
            <person name="Scharfe M."/>
            <person name="Scherens B."/>
            <person name="Scholler P."/>
            <person name="Schwager C."/>
            <person name="Schwarz S."/>
            <person name="Underwood A.P."/>
            <person name="Urrestarazu L.A."/>
            <person name="Vandenbol M."/>
            <person name="Verhasselt P."/>
            <person name="Vierendeels F."/>
            <person name="Voet M."/>
            <person name="Volckaert G."/>
            <person name="Voss H."/>
            <person name="Wambutt R."/>
            <person name="Wedler E."/>
            <person name="Wedler H."/>
            <person name="Zimmermann F.K."/>
            <person name="Zollner A."/>
            <person name="Hani J."/>
            <person name="Hoheisel J.D."/>
        </authorList>
    </citation>
    <scope>NUCLEOTIDE SEQUENCE [LARGE SCALE GENOMIC DNA]</scope>
    <source>
        <strain>ATCC 204508 / S288c</strain>
    </source>
</reference>
<reference key="2">
    <citation type="journal article" date="2014" name="G3 (Bethesda)">
        <title>The reference genome sequence of Saccharomyces cerevisiae: Then and now.</title>
        <authorList>
            <person name="Engel S.R."/>
            <person name="Dietrich F.S."/>
            <person name="Fisk D.G."/>
            <person name="Binkley G."/>
            <person name="Balakrishnan R."/>
            <person name="Costanzo M.C."/>
            <person name="Dwight S.S."/>
            <person name="Hitz B.C."/>
            <person name="Karra K."/>
            <person name="Nash R.S."/>
            <person name="Weng S."/>
            <person name="Wong E.D."/>
            <person name="Lloyd P."/>
            <person name="Skrzypek M.S."/>
            <person name="Miyasato S.R."/>
            <person name="Simison M."/>
            <person name="Cherry J.M."/>
        </authorList>
    </citation>
    <scope>GENOME REANNOTATION</scope>
    <source>
        <strain>ATCC 204508 / S288c</strain>
    </source>
</reference>
<reference key="3">
    <citation type="journal article" date="2001" name="J. Bacteriol.">
        <title>Reciprocal regulation of anaerobic and aerobic cell wall mannoprotein gene expression in Saccharomyces cerevisiae.</title>
        <authorList>
            <person name="Abramova N.E."/>
            <person name="Sertil O."/>
            <person name="Mehta S."/>
            <person name="Lowry C.V."/>
        </authorList>
    </citation>
    <scope>INDUCTION</scope>
</reference>
<reference key="4">
    <citation type="journal article" date="2001" name="Nucleic Acids Res.">
        <title>Induction and repression of DAN1 and the family of anaerobic mannoprotein genes in Saccharomyces cerevisiae occurs through a complex array of regulatory sites.</title>
        <authorList>
            <person name="Cohen B.D."/>
            <person name="Sertil O."/>
            <person name="Abramova N.E."/>
            <person name="Davies K.J.A."/>
            <person name="Lowry C.V."/>
        </authorList>
    </citation>
    <scope>INDUCTION</scope>
</reference>
<reference key="5">
    <citation type="journal article" date="2009" name="Microbiology">
        <title>Functional analyses of PAU genes in Saccharomyces cerevisiae.</title>
        <authorList>
            <person name="Luo Z."/>
            <person name="van Vuuren H.J."/>
        </authorList>
    </citation>
    <scope>INDUCTION</scope>
</reference>
<comment type="function">
    <text evidence="1">Component of the cell wall.</text>
</comment>
<comment type="subcellular location">
    <subcellularLocation>
        <location evidence="1">Secreted</location>
        <location evidence="1">Cell wall</location>
    </subcellularLocation>
</comment>
<comment type="induction">
    <text evidence="3 4 5">Induced at low temperature and during anaerobic growth and completely repressed during aerobic growth. Induced at an early stage of fermentation and remains almost constant throughout the entire fermentation process.</text>
</comment>
<comment type="PTM">
    <text evidence="1">O-glycosylated.</text>
</comment>
<comment type="similarity">
    <text evidence="6">Belongs to the SRP1/TIP1 family. Seripauperin subfamily.</text>
</comment>
<organism>
    <name type="scientific">Saccharomyces cerevisiae (strain ATCC 204508 / S288c)</name>
    <name type="common">Baker's yeast</name>
    <dbReference type="NCBI Taxonomy" id="559292"/>
    <lineage>
        <taxon>Eukaryota</taxon>
        <taxon>Fungi</taxon>
        <taxon>Dikarya</taxon>
        <taxon>Ascomycota</taxon>
        <taxon>Saccharomycotina</taxon>
        <taxon>Saccharomycetes</taxon>
        <taxon>Saccharomycetales</taxon>
        <taxon>Saccharomycetaceae</taxon>
        <taxon>Saccharomyces</taxon>
    </lineage>
</organism>
<keyword id="KW-0134">Cell wall</keyword>
<keyword id="KW-0961">Cell wall biogenesis/degradation</keyword>
<keyword id="KW-0325">Glycoprotein</keyword>
<keyword id="KW-1185">Reference proteome</keyword>
<keyword id="KW-0964">Secreted</keyword>
<keyword id="KW-0732">Signal</keyword>